<keyword id="KW-0175">Coiled coil</keyword>
<keyword id="KW-0479">Metal-binding</keyword>
<keyword id="KW-0539">Nucleus</keyword>
<keyword id="KW-1185">Reference proteome</keyword>
<keyword id="KW-0677">Repeat</keyword>
<keyword id="KW-0862">Zinc</keyword>
<keyword id="KW-0863">Zinc-finger</keyword>
<reference key="1">
    <citation type="journal article" date="1998" name="Science">
        <title>Genome sequence of the nematode C. elegans: a platform for investigating biology.</title>
        <authorList>
            <consortium name="The C. elegans sequencing consortium"/>
        </authorList>
    </citation>
    <scope>NUCLEOTIDE SEQUENCE [LARGE SCALE GENOMIC DNA]</scope>
    <source>
        <strain>Bristol N2</strain>
    </source>
</reference>
<comment type="subcellular location">
    <subcellularLocation>
        <location evidence="3">Nucleus</location>
    </subcellularLocation>
</comment>
<evidence type="ECO:0000255" key="1"/>
<evidence type="ECO:0000255" key="2">
    <source>
        <dbReference type="PROSITE-ProRule" id="PRU01145"/>
    </source>
</evidence>
<evidence type="ECO:0000305" key="3"/>
<name>YQ58_CAEEL</name>
<dbReference type="EMBL" id="Z46787">
    <property type="protein sequence ID" value="CAA86746.1"/>
    <property type="molecule type" value="Genomic_DNA"/>
</dbReference>
<dbReference type="PIR" id="T19329">
    <property type="entry name" value="T19329"/>
</dbReference>
<dbReference type="RefSeq" id="NP_497829.1">
    <property type="nucleotide sequence ID" value="NM_065428.8"/>
</dbReference>
<dbReference type="SMR" id="Q09464"/>
<dbReference type="BioGRID" id="40768">
    <property type="interactions" value="2"/>
</dbReference>
<dbReference type="FunCoup" id="Q09464">
    <property type="interactions" value="277"/>
</dbReference>
<dbReference type="STRING" id="6239.C16C10.8.1"/>
<dbReference type="PaxDb" id="6239-C16C10.8"/>
<dbReference type="PeptideAtlas" id="Q09464"/>
<dbReference type="EnsemblMetazoa" id="C16C10.8.1">
    <property type="protein sequence ID" value="C16C10.8.1"/>
    <property type="gene ID" value="WBGene00007628"/>
</dbReference>
<dbReference type="GeneID" id="175531"/>
<dbReference type="KEGG" id="cel:CELE_C16C10.8"/>
<dbReference type="UCSC" id="C16C10.8.1">
    <property type="organism name" value="c. elegans"/>
</dbReference>
<dbReference type="AGR" id="WB:WBGene00007628"/>
<dbReference type="CTD" id="175531"/>
<dbReference type="WormBase" id="C16C10.8">
    <property type="protein sequence ID" value="CE01499"/>
    <property type="gene ID" value="WBGene00007628"/>
</dbReference>
<dbReference type="eggNOG" id="KOG2186">
    <property type="taxonomic scope" value="Eukaryota"/>
</dbReference>
<dbReference type="GeneTree" id="ENSGT00390000003477"/>
<dbReference type="HOGENOM" id="CLU_057137_1_1_1"/>
<dbReference type="InParanoid" id="Q09464"/>
<dbReference type="OMA" id="QNWIKNS"/>
<dbReference type="OrthoDB" id="21474at2759"/>
<dbReference type="PhylomeDB" id="Q09464"/>
<dbReference type="PRO" id="PR:Q09464"/>
<dbReference type="Proteomes" id="UP000001940">
    <property type="component" value="Chromosome III"/>
</dbReference>
<dbReference type="Bgee" id="WBGene00007628">
    <property type="expression patterns" value="Expressed in larva and 4 other cell types or tissues"/>
</dbReference>
<dbReference type="GO" id="GO:0005730">
    <property type="term" value="C:nucleolus"/>
    <property type="evidence" value="ECO:0000318"/>
    <property type="project" value="GO_Central"/>
</dbReference>
<dbReference type="GO" id="GO:0003677">
    <property type="term" value="F:DNA binding"/>
    <property type="evidence" value="ECO:0000318"/>
    <property type="project" value="GO_Central"/>
</dbReference>
<dbReference type="GO" id="GO:0008270">
    <property type="term" value="F:zinc ion binding"/>
    <property type="evidence" value="ECO:0007669"/>
    <property type="project" value="UniProtKB-KW"/>
</dbReference>
<dbReference type="GO" id="GO:0000122">
    <property type="term" value="P:negative regulation of transcription by RNA polymerase II"/>
    <property type="evidence" value="ECO:0000318"/>
    <property type="project" value="GO_Central"/>
</dbReference>
<dbReference type="GO" id="GO:0006364">
    <property type="term" value="P:rRNA processing"/>
    <property type="evidence" value="ECO:0000318"/>
    <property type="project" value="GO_Central"/>
</dbReference>
<dbReference type="FunFam" id="1.10.10.2100:FF:000002">
    <property type="entry name" value="cell growth-regulating nucleolar protein-like"/>
    <property type="match status" value="1"/>
</dbReference>
<dbReference type="FunFam" id="3.30.1490.490:FF:000001">
    <property type="entry name" value="cell growth-regulating nucleolar protein-like"/>
    <property type="match status" value="1"/>
</dbReference>
<dbReference type="Gene3D" id="1.10.10.2100">
    <property type="match status" value="1"/>
</dbReference>
<dbReference type="Gene3D" id="3.30.1490.490">
    <property type="match status" value="1"/>
</dbReference>
<dbReference type="InterPro" id="IPR039999">
    <property type="entry name" value="LYAR"/>
</dbReference>
<dbReference type="InterPro" id="IPR014898">
    <property type="entry name" value="Znf_C2H2_LYAR"/>
</dbReference>
<dbReference type="InterPro" id="IPR036236">
    <property type="entry name" value="Znf_C2H2_sf"/>
</dbReference>
<dbReference type="PANTHER" id="PTHR13100:SF10">
    <property type="entry name" value="CELL GROWTH-REGULATING NUCLEOLAR PROTEIN"/>
    <property type="match status" value="1"/>
</dbReference>
<dbReference type="PANTHER" id="PTHR13100">
    <property type="entry name" value="CELL GROWTH-REGULATING NUCLEOLAR PROTEIN LYAR"/>
    <property type="match status" value="1"/>
</dbReference>
<dbReference type="Pfam" id="PF08790">
    <property type="entry name" value="zf-LYAR"/>
    <property type="match status" value="1"/>
</dbReference>
<dbReference type="SUPFAM" id="SSF57667">
    <property type="entry name" value="beta-beta-alpha zinc fingers"/>
    <property type="match status" value="2"/>
</dbReference>
<dbReference type="PROSITE" id="PS51804">
    <property type="entry name" value="ZF_C2HC_LYAR"/>
    <property type="match status" value="2"/>
</dbReference>
<accession>Q09464</accession>
<feature type="chain" id="PRO_0000065182" description="Uncharacterized protein C16C10.8">
    <location>
        <begin position="1"/>
        <end position="253"/>
    </location>
</feature>
<feature type="zinc finger region" description="C2HC LYAR-type 1" evidence="2">
    <location>
        <begin position="1"/>
        <end position="26"/>
    </location>
</feature>
<feature type="zinc finger region" description="C2HC LYAR-type 2" evidence="2">
    <location>
        <begin position="27"/>
        <end position="51"/>
    </location>
</feature>
<feature type="coiled-coil region" evidence="1">
    <location>
        <begin position="136"/>
        <end position="171"/>
    </location>
</feature>
<feature type="binding site" evidence="2">
    <location>
        <position position="6"/>
    </location>
    <ligand>
        <name>Zn(2+)</name>
        <dbReference type="ChEBI" id="CHEBI:29105"/>
        <label>1</label>
    </ligand>
</feature>
<feature type="binding site" evidence="2">
    <location>
        <position position="9"/>
    </location>
    <ligand>
        <name>Zn(2+)</name>
        <dbReference type="ChEBI" id="CHEBI:29105"/>
        <label>1</label>
    </ligand>
</feature>
<feature type="binding site" evidence="2">
    <location>
        <position position="21"/>
    </location>
    <ligand>
        <name>Zn(2+)</name>
        <dbReference type="ChEBI" id="CHEBI:29105"/>
        <label>1</label>
    </ligand>
</feature>
<feature type="binding site" evidence="2">
    <location>
        <position position="25"/>
    </location>
    <ligand>
        <name>Zn(2+)</name>
        <dbReference type="ChEBI" id="CHEBI:29105"/>
        <label>1</label>
    </ligand>
</feature>
<feature type="binding site" evidence="2">
    <location>
        <position position="32"/>
    </location>
    <ligand>
        <name>Zn(2+)</name>
        <dbReference type="ChEBI" id="CHEBI:29105"/>
        <label>2</label>
    </ligand>
</feature>
<feature type="binding site" evidence="2">
    <location>
        <position position="35"/>
    </location>
    <ligand>
        <name>Zn(2+)</name>
        <dbReference type="ChEBI" id="CHEBI:29105"/>
        <label>2</label>
    </ligand>
</feature>
<feature type="binding site" evidence="2">
    <location>
        <position position="47"/>
    </location>
    <ligand>
        <name>Zn(2+)</name>
        <dbReference type="ChEBI" id="CHEBI:29105"/>
        <label>2</label>
    </ligand>
</feature>
<feature type="binding site" evidence="2">
    <location>
        <position position="50"/>
    </location>
    <ligand>
        <name>Zn(2+)</name>
        <dbReference type="ChEBI" id="CHEBI:29105"/>
        <label>2</label>
    </ligand>
</feature>
<organism>
    <name type="scientific">Caenorhabditis elegans</name>
    <dbReference type="NCBI Taxonomy" id="6239"/>
    <lineage>
        <taxon>Eukaryota</taxon>
        <taxon>Metazoa</taxon>
        <taxon>Ecdysozoa</taxon>
        <taxon>Nematoda</taxon>
        <taxon>Chromadorea</taxon>
        <taxon>Rhabditida</taxon>
        <taxon>Rhabditina</taxon>
        <taxon>Rhabditomorpha</taxon>
        <taxon>Rhabditoidea</taxon>
        <taxon>Rhabditidae</taxon>
        <taxon>Peloderinae</taxon>
        <taxon>Caenorhabditis</taxon>
    </lineage>
</organism>
<protein>
    <recommendedName>
        <fullName>Uncharacterized protein C16C10.8</fullName>
    </recommendedName>
</protein>
<sequence length="253" mass="28516">MVFFSCNNCGEACKKNQVERHLFQCRNTTFSCIDCQLVYTRETYKDHVKCITENQKYGGKNYVEKENKGEAKQNAWVDQVNRAIEFVTDSQVKELLKSVAGFANIPRKEAKFINFLTNSCRLRDKNLALRAWQAIAAEADKMREEAIRKQEETQKMEKAQKEAAAAAKKETTVATTAAEVTDAPESTFKWKKVIKRKLKENGGEMKIKKLKKAIIEELSAAGAASDDVDSIFDEKLQKCAAVTVDGKKVSLVV</sequence>
<gene>
    <name type="ORF">C16C10.8</name>
</gene>
<proteinExistence type="predicted"/>